<feature type="chain" id="PRO_1000198276" description="UPF0301 protein YqgE">
    <location>
        <begin position="1"/>
        <end position="187"/>
    </location>
</feature>
<name>YQGE_ESCF3</name>
<accession>B7LPR5</accession>
<reference key="1">
    <citation type="journal article" date="2009" name="PLoS Genet.">
        <title>Organised genome dynamics in the Escherichia coli species results in highly diverse adaptive paths.</title>
        <authorList>
            <person name="Touchon M."/>
            <person name="Hoede C."/>
            <person name="Tenaillon O."/>
            <person name="Barbe V."/>
            <person name="Baeriswyl S."/>
            <person name="Bidet P."/>
            <person name="Bingen E."/>
            <person name="Bonacorsi S."/>
            <person name="Bouchier C."/>
            <person name="Bouvet O."/>
            <person name="Calteau A."/>
            <person name="Chiapello H."/>
            <person name="Clermont O."/>
            <person name="Cruveiller S."/>
            <person name="Danchin A."/>
            <person name="Diard M."/>
            <person name="Dossat C."/>
            <person name="Karoui M.E."/>
            <person name="Frapy E."/>
            <person name="Garry L."/>
            <person name="Ghigo J.M."/>
            <person name="Gilles A.M."/>
            <person name="Johnson J."/>
            <person name="Le Bouguenec C."/>
            <person name="Lescat M."/>
            <person name="Mangenot S."/>
            <person name="Martinez-Jehanne V."/>
            <person name="Matic I."/>
            <person name="Nassif X."/>
            <person name="Oztas S."/>
            <person name="Petit M.A."/>
            <person name="Pichon C."/>
            <person name="Rouy Z."/>
            <person name="Ruf C.S."/>
            <person name="Schneider D."/>
            <person name="Tourret J."/>
            <person name="Vacherie B."/>
            <person name="Vallenet D."/>
            <person name="Medigue C."/>
            <person name="Rocha E.P.C."/>
            <person name="Denamur E."/>
        </authorList>
    </citation>
    <scope>NUCLEOTIDE SEQUENCE [LARGE SCALE GENOMIC DNA]</scope>
    <source>
        <strain>ATCC 35469 / DSM 13698 / BCRC 15582 / CCUG 18766 / IAM 14443 / JCM 21226 / LMG 7866 / NBRC 102419 / NCTC 12128 / CDC 0568-73</strain>
    </source>
</reference>
<proteinExistence type="inferred from homology"/>
<protein>
    <recommendedName>
        <fullName evidence="1">UPF0301 protein YqgE</fullName>
    </recommendedName>
</protein>
<sequence>MNLQHHFLIAMPALQDPLFRRSVVYICEHNPDGAMGLIINKPLENLQIEGILEKLKITPEPRDPAIRLDKPVMLGGPLAEDRGFILHTPPSRFASSIRISDNTVVTTSRDVLETIGTPKQPADVLVALGYASWEKGQLEQEILDNAWLTAPADLNILFKTPIADRWRDAAKLIGVDILTMPGVAGHA</sequence>
<comment type="similarity">
    <text evidence="1">Belongs to the UPF0301 (AlgH) family.</text>
</comment>
<gene>
    <name evidence="1" type="primary">yqgE</name>
    <name type="ordered locus">EFER_2887</name>
</gene>
<organism>
    <name type="scientific">Escherichia fergusonii (strain ATCC 35469 / DSM 13698 / CCUG 18766 / IAM 14443 / JCM 21226 / LMG 7866 / NBRC 102419 / NCTC 12128 / CDC 0568-73)</name>
    <dbReference type="NCBI Taxonomy" id="585054"/>
    <lineage>
        <taxon>Bacteria</taxon>
        <taxon>Pseudomonadati</taxon>
        <taxon>Pseudomonadota</taxon>
        <taxon>Gammaproteobacteria</taxon>
        <taxon>Enterobacterales</taxon>
        <taxon>Enterobacteriaceae</taxon>
        <taxon>Escherichia</taxon>
    </lineage>
</organism>
<evidence type="ECO:0000255" key="1">
    <source>
        <dbReference type="HAMAP-Rule" id="MF_00758"/>
    </source>
</evidence>
<dbReference type="EMBL" id="CU928158">
    <property type="protein sequence ID" value="CAQ90380.1"/>
    <property type="molecule type" value="Genomic_DNA"/>
</dbReference>
<dbReference type="RefSeq" id="WP_002431379.1">
    <property type="nucleotide sequence ID" value="NC_011740.1"/>
</dbReference>
<dbReference type="SMR" id="B7LPR5"/>
<dbReference type="KEGG" id="efe:EFER_2887"/>
<dbReference type="HOGENOM" id="CLU_057596_1_0_6"/>
<dbReference type="Proteomes" id="UP000000745">
    <property type="component" value="Chromosome"/>
</dbReference>
<dbReference type="GO" id="GO:0005829">
    <property type="term" value="C:cytosol"/>
    <property type="evidence" value="ECO:0007669"/>
    <property type="project" value="TreeGrafter"/>
</dbReference>
<dbReference type="FunFam" id="3.30.70.1300:FF:000001">
    <property type="entry name" value="UPF0301 protein YqgE"/>
    <property type="match status" value="1"/>
</dbReference>
<dbReference type="Gene3D" id="3.40.1740.10">
    <property type="entry name" value="VC0467-like"/>
    <property type="match status" value="1"/>
</dbReference>
<dbReference type="Gene3D" id="3.30.70.1300">
    <property type="entry name" value="VC0467-like domains"/>
    <property type="match status" value="1"/>
</dbReference>
<dbReference type="HAMAP" id="MF_00758">
    <property type="entry name" value="UPF0301"/>
    <property type="match status" value="1"/>
</dbReference>
<dbReference type="InterPro" id="IPR003774">
    <property type="entry name" value="AlgH-like"/>
</dbReference>
<dbReference type="NCBIfam" id="NF001266">
    <property type="entry name" value="PRK00228.1-1"/>
    <property type="match status" value="1"/>
</dbReference>
<dbReference type="PANTHER" id="PTHR30327">
    <property type="entry name" value="UNCHARACTERIZED PROTEIN YQGE"/>
    <property type="match status" value="1"/>
</dbReference>
<dbReference type="PANTHER" id="PTHR30327:SF1">
    <property type="entry name" value="UPF0301 PROTEIN YQGE"/>
    <property type="match status" value="1"/>
</dbReference>
<dbReference type="Pfam" id="PF02622">
    <property type="entry name" value="DUF179"/>
    <property type="match status" value="1"/>
</dbReference>
<dbReference type="SUPFAM" id="SSF143456">
    <property type="entry name" value="VC0467-like"/>
    <property type="match status" value="1"/>
</dbReference>